<evidence type="ECO:0000250" key="1">
    <source>
        <dbReference type="UniProtKB" id="Q6SSJ6"/>
    </source>
</evidence>
<evidence type="ECO:0000269" key="2">
    <source>
    </source>
</evidence>
<evidence type="ECO:0000269" key="3">
    <source>
    </source>
</evidence>
<evidence type="ECO:0000303" key="4">
    <source>
    </source>
</evidence>
<evidence type="ECO:0000305" key="5"/>
<evidence type="ECO:0000305" key="6">
    <source>
    </source>
</evidence>
<feature type="chain" id="PRO_0000450088" description="FAD-dependent monooxygenase ATEG_03635">
    <location>
        <begin position="1"/>
        <end position="705"/>
    </location>
</feature>
<feature type="binding site" evidence="1">
    <location>
        <begin position="86"/>
        <end position="115"/>
    </location>
    <ligand>
        <name>FAD</name>
        <dbReference type="ChEBI" id="CHEBI:57692"/>
    </ligand>
</feature>
<feature type="binding site" evidence="1">
    <location>
        <position position="208"/>
    </location>
    <ligand>
        <name>FAD</name>
        <dbReference type="ChEBI" id="CHEBI:57692"/>
    </ligand>
</feature>
<feature type="binding site" evidence="1">
    <location>
        <begin position="308"/>
        <end position="310"/>
    </location>
    <ligand>
        <name>FAD</name>
        <dbReference type="ChEBI" id="CHEBI:57692"/>
    </ligand>
</feature>
<feature type="binding site" evidence="1">
    <location>
        <position position="408"/>
    </location>
    <ligand>
        <name>FAD</name>
        <dbReference type="ChEBI" id="CHEBI:57692"/>
    </ligand>
</feature>
<accession>Q0CRP9</accession>
<keyword id="KW-0274">FAD</keyword>
<keyword id="KW-0285">Flavoprotein</keyword>
<keyword id="KW-0503">Monooxygenase</keyword>
<keyword id="KW-0560">Oxidoreductase</keyword>
<keyword id="KW-1185">Reference proteome</keyword>
<dbReference type="EC" id="1.-.-.-" evidence="3"/>
<dbReference type="EMBL" id="CH476598">
    <property type="protein sequence ID" value="EAU35437.1"/>
    <property type="molecule type" value="Genomic_DNA"/>
</dbReference>
<dbReference type="RefSeq" id="XP_001212813.1">
    <property type="nucleotide sequence ID" value="XM_001212813.1"/>
</dbReference>
<dbReference type="SMR" id="Q0CRP9"/>
<dbReference type="STRING" id="341663.Q0CRP9"/>
<dbReference type="EnsemblFungi" id="EAU35437">
    <property type="protein sequence ID" value="EAU35437"/>
    <property type="gene ID" value="ATEG_03635"/>
</dbReference>
<dbReference type="GeneID" id="4318796"/>
<dbReference type="VEuPathDB" id="FungiDB:ATEG_03635"/>
<dbReference type="eggNOG" id="KOG3855">
    <property type="taxonomic scope" value="Eukaryota"/>
</dbReference>
<dbReference type="HOGENOM" id="CLU_009665_9_2_1"/>
<dbReference type="OMA" id="FKTDYPH"/>
<dbReference type="OrthoDB" id="1716816at2759"/>
<dbReference type="Proteomes" id="UP000007963">
    <property type="component" value="Unassembled WGS sequence"/>
</dbReference>
<dbReference type="GO" id="GO:0071949">
    <property type="term" value="F:FAD binding"/>
    <property type="evidence" value="ECO:0007669"/>
    <property type="project" value="InterPro"/>
</dbReference>
<dbReference type="GO" id="GO:0016709">
    <property type="term" value="F:oxidoreductase activity, acting on paired donors, with incorporation or reduction of molecular oxygen, NAD(P)H as one donor, and incorporation of one atom of oxygen"/>
    <property type="evidence" value="ECO:0007669"/>
    <property type="project" value="UniProtKB-ARBA"/>
</dbReference>
<dbReference type="Gene3D" id="3.40.30.20">
    <property type="match status" value="1"/>
</dbReference>
<dbReference type="Gene3D" id="3.30.9.10">
    <property type="entry name" value="D-Amino Acid Oxidase, subunit A, domain 2"/>
    <property type="match status" value="1"/>
</dbReference>
<dbReference type="Gene3D" id="3.50.50.60">
    <property type="entry name" value="FAD/NAD(P)-binding domain"/>
    <property type="match status" value="1"/>
</dbReference>
<dbReference type="InterPro" id="IPR002938">
    <property type="entry name" value="FAD-bd"/>
</dbReference>
<dbReference type="InterPro" id="IPR036188">
    <property type="entry name" value="FAD/NAD-bd_sf"/>
</dbReference>
<dbReference type="InterPro" id="IPR012941">
    <property type="entry name" value="Phe_hydrox_C_dim_dom"/>
</dbReference>
<dbReference type="InterPro" id="IPR038220">
    <property type="entry name" value="PHOX_C_sf"/>
</dbReference>
<dbReference type="InterPro" id="IPR050641">
    <property type="entry name" value="RIFMO-like"/>
</dbReference>
<dbReference type="InterPro" id="IPR036249">
    <property type="entry name" value="Thioredoxin-like_sf"/>
</dbReference>
<dbReference type="PANTHER" id="PTHR43004:SF20">
    <property type="entry name" value="2-MONOOXYGENASE, PUTATIVE (AFU_ORTHOLOGUE AFUA_1G13660)-RELATED"/>
    <property type="match status" value="1"/>
</dbReference>
<dbReference type="PANTHER" id="PTHR43004">
    <property type="entry name" value="TRK SYSTEM POTASSIUM UPTAKE PROTEIN"/>
    <property type="match status" value="1"/>
</dbReference>
<dbReference type="Pfam" id="PF01494">
    <property type="entry name" value="FAD_binding_3"/>
    <property type="match status" value="1"/>
</dbReference>
<dbReference type="Pfam" id="PF07976">
    <property type="entry name" value="Phe_hydrox_dim"/>
    <property type="match status" value="1"/>
</dbReference>
<dbReference type="PRINTS" id="PR00420">
    <property type="entry name" value="RNGMNOXGNASE"/>
</dbReference>
<dbReference type="SUPFAM" id="SSF54373">
    <property type="entry name" value="FAD-linked reductases, C-terminal domain"/>
    <property type="match status" value="1"/>
</dbReference>
<dbReference type="SUPFAM" id="SSF51905">
    <property type="entry name" value="FAD/NAD(P)-binding domain"/>
    <property type="match status" value="1"/>
</dbReference>
<dbReference type="SUPFAM" id="SSF52833">
    <property type="entry name" value="Thioredoxin-like"/>
    <property type="match status" value="1"/>
</dbReference>
<protein>
    <recommendedName>
        <fullName evidence="4">FAD-dependent monooxygenase ATEG_03635</fullName>
        <ecNumber evidence="3">1.-.-.-</ecNumber>
    </recommendedName>
    <alternativeName>
        <fullName evidence="4">Azasperpyranone A biosynthesis cluster A protein ATEG_03635</fullName>
    </alternativeName>
</protein>
<organism>
    <name type="scientific">Aspergillus terreus (strain NIH 2624 / FGSC A1156)</name>
    <dbReference type="NCBI Taxonomy" id="341663"/>
    <lineage>
        <taxon>Eukaryota</taxon>
        <taxon>Fungi</taxon>
        <taxon>Dikarya</taxon>
        <taxon>Ascomycota</taxon>
        <taxon>Pezizomycotina</taxon>
        <taxon>Eurotiomycetes</taxon>
        <taxon>Eurotiomycetidae</taxon>
        <taxon>Eurotiales</taxon>
        <taxon>Aspergillaceae</taxon>
        <taxon>Aspergillus</taxon>
        <taxon>Aspergillus subgen. Circumdati</taxon>
    </lineage>
</organism>
<proteinExistence type="evidence at protein level"/>
<sequence length="705" mass="78734">MASTLPPQTWEAGYARPADQASWEAETNYVAESGERAHWMLPVHTEPPTSTIGNGLGLTHLRTWPSIYDGTATGKPEWFKPSKEVDVLICGAGPFGLELGLILARQGISFRIVDKANAPCLSGRADGVHPRALEQLHAWGLAHEVSEEGPILNSTVLFRNGVKLFHGFSSTCDSRYKGIHIITQGQMERIYIRDLLRHQIVVERGTTVQHFNVQSTSQDHPVRATLKNVATGEEEVVRARYLIGADGAASSIREQLGVEFDGITTDIYWAIMDCRFKTDYPHILGFNIIISAEHGGSIVIPREDGYTRFYTQINGEKARKLQANRQARRNASTVGETRIDDHGITPDEVLEQLNKIIAPHKVEFASPMSWFSVWRVSERVARHFSSPDLRVHLGGDAAVLGAFGLNSSIYDAANLGWKLGLVLRKHAEPSILTTYDKERRLFANRVIRCSGAYLRFICNSSLPLAALRDLGEHLESHDENLPLLDGSTEADREFLYTFFKRHAMFLLGVEWPIVNSAICPADTKVRASSLRNGVRAPNPRVCLATDYTAYLYDKMMGVGRFHLLLFGSDLQGPVRQRLAVLAGELRKREGFYERFGGREMFNLILVVKTLSHQTAELLEGDLAPLKDHATTVYDDRAPDDDAHYWYGVNHARGALVVVRPDLAVGVSVWPEEIGKLNKYFASFLLECEETLPTKKSLLARLWDAL</sequence>
<gene>
    <name type="ORF">ATEG_03635</name>
</gene>
<reference key="1">
    <citation type="submission" date="2005-09" db="EMBL/GenBank/DDBJ databases">
        <title>Annotation of the Aspergillus terreus NIH2624 genome.</title>
        <authorList>
            <person name="Birren B.W."/>
            <person name="Lander E.S."/>
            <person name="Galagan J.E."/>
            <person name="Nusbaum C."/>
            <person name="Devon K."/>
            <person name="Henn M."/>
            <person name="Ma L.-J."/>
            <person name="Jaffe D.B."/>
            <person name="Butler J."/>
            <person name="Alvarez P."/>
            <person name="Gnerre S."/>
            <person name="Grabherr M."/>
            <person name="Kleber M."/>
            <person name="Mauceli E.W."/>
            <person name="Brockman W."/>
            <person name="Rounsley S."/>
            <person name="Young S.K."/>
            <person name="LaButti K."/>
            <person name="Pushparaj V."/>
            <person name="DeCaprio D."/>
            <person name="Crawford M."/>
            <person name="Koehrsen M."/>
            <person name="Engels R."/>
            <person name="Montgomery P."/>
            <person name="Pearson M."/>
            <person name="Howarth C."/>
            <person name="Larson L."/>
            <person name="Luoma S."/>
            <person name="White J."/>
            <person name="Alvarado L."/>
            <person name="Kodira C.D."/>
            <person name="Zeng Q."/>
            <person name="Oleary S."/>
            <person name="Yandava C."/>
            <person name="Denning D.W."/>
            <person name="Nierman W.C."/>
            <person name="Milne T."/>
            <person name="Madden K."/>
        </authorList>
    </citation>
    <scope>NUCLEOTIDE SEQUENCE [LARGE SCALE GENOMIC DNA]</scope>
    <source>
        <strain>NIH 2624 / FGSC A1156</strain>
    </source>
</reference>
<reference key="2">
    <citation type="journal article" date="2014" name="Chem. Biol.">
        <title>Aryl-aldehyde formation in fungal polyketides: discovery and characterization of a distinct biosynthetic mechanism.</title>
        <authorList>
            <person name="Wang M."/>
            <person name="Beissner M."/>
            <person name="Zhao H."/>
        </authorList>
    </citation>
    <scope>FUNCTION</scope>
</reference>
<reference key="3">
    <citation type="journal article" date="2013" name="J. Am. Chem. Soc.">
        <title>An efficient system for heterologous expression of secondary metabolite genes in Aspergillus nidulans.</title>
        <authorList>
            <person name="Chiang Y.M."/>
            <person name="Oakley C.E."/>
            <person name="Ahuja M."/>
            <person name="Entwistle R."/>
            <person name="Schultz A."/>
            <person name="Chang S.L."/>
            <person name="Sung C.T."/>
            <person name="Wang C.C."/>
            <person name="Oakley B.R."/>
        </authorList>
    </citation>
    <scope>FUNCTION</scope>
</reference>
<reference key="4">
    <citation type="journal article" date="2020" name="Angew. Chem. Int. Ed.">
        <title>Collaborative biosynthesis of a class of bioactive azaphilones by two separate gene clusters containing four PKS/NRPSs with transcriptional cosstalk in fungi.</title>
        <authorList>
            <person name="Huang X."/>
            <person name="Zhang W."/>
            <person name="Tang S."/>
            <person name="Wei S."/>
            <person name="Lu X."/>
        </authorList>
    </citation>
    <scope>FUNCTION</scope>
    <scope>INDUCTION</scope>
    <scope>DISRUPTION PHENOTYPE</scope>
    <scope>CATALYTIC ACTIVITY</scope>
    <scope>PATHWAY</scope>
    <scope>BIOTECHNOLOGY</scope>
</reference>
<comment type="function">
    <text evidence="2 3 6">FAD-dependent monooxygenase; part of the cluster A that mediates the biosynthesis of azasperpyranones, members of the azaphilone family that exhibit anti-cancer activities (PubMed:31908094). Azasperpyranones are synthesized by 2 clusters, A and B (PubMed:31908094). Cluster A is responsible for the production of the polyhydric phenol moiety while the azaphilonoid scaffold is produced by the cluster B (PubMed:31908094). The non-reducing polyketide synthase ATEG_03629 produces 5-methyl orsellinic acid, which is then reduced to 5-methyl orsellinic aldehyde by the NRPS-like protein ATEG_03630 (PubMed:24412543). 5-methyl orsellinic aldehyde is then first hydroxylated by the FAD-dependent monooxygenase ATEG_03635 and subsequently hydroxylated by the cytochrome P450 monooxygenase ATEG_03631 to produce the unstable polyhydric phenol precursor of azasperpyranones (PubMed:31908094). On the other hand, the polyketide synthase ATEG_07659 is responsible for producing the 3,5-dimethyloctadienone moiety from acetyl-CoA, three malonyl-CoA, and two S-adenosyl methionines (SAM) (Probable). The 3,5-dimethyloctadienone moiety is then loaded onto the SAT domain of ATEG_07661 and extended with four malonyl-CoA and one SAM, which leads to the formation of 2,4-dihydroxy-6-(5,7-dimethyl-2-oxo-trans-3-trans-5-nonadienyl)-3-methylbenzaldehyde (compound 8) after reductive release and aldol condensation (Probable). The FAD-dependent monooxygenase ATEG_07662 is the next enzyme in the biosynthesis sequence and hydroxylates the side chain at the benzylic position of compound 8 (Probable). In Aspergillus nidulans, afoF, the ortholog of the FAD-dependent oxygenase ATEG_07660, is the key enzyme for the biosynthesis of asperfuranone by catalyzing the hydroxylation at C-8 of to prevent the formation of a six-membered ring hemiacetal intermediate and thus facilitating the formation of a five-membered ring to produce asperfuranone (Probable). In Aspergillus terreus, ATEG_07660 is probably not functional, which leads to the formation of the six-membered ring hemiacetal intermediate presperpyranone instead of asperfuranone (Probable). Finally, ATEG_03636 is involved in the condensation of the polyhydric phenol moiety produced by cluster A and the perasperpyranone precursor produced by cluster B, to yield azasperpyranone A (Probable). Further modifications of azasperpyranone A result in the production of derivatives, including azasperpyranone B to F (PubMed:31908094).</text>
</comment>
<comment type="cofactor">
    <cofactor evidence="1">
        <name>FAD</name>
        <dbReference type="ChEBI" id="CHEBI:57692"/>
    </cofactor>
</comment>
<comment type="pathway">
    <text evidence="3">Secondary metabolite biosynthesis.</text>
</comment>
<comment type="induction">
    <text evidence="3">Expression is induced by the azasperpyranone cluster A-specific transcription factor ATEG_03638 which is itself regulated by the azasperpyranone transcriptional regulator ATEG_07667.</text>
</comment>
<comment type="disruption phenotype">
    <text evidence="3">Abolishes the production of azasperpyranone A.</text>
</comment>
<comment type="biotechnology">
    <text evidence="3">Azasperpyranones display potential anti-cancer activities (PubMed:31908094). Azasperpyranones A, C, D, and F exhibit potent growth-inhibitory activity against the A549, HepG2, HCT-116, and HL-60 cell lines, with IC(50) values of 2.39-14.42 mm, respectively (PubMed:31908094). Moreover, azasperpyranone D significantly inhibits HCT-116 xenograft tumor growth in BALB/c-nu mice (PubMed:31908094). In addition, azasperpyranones A and C can bind with four kinds of therapeutic targets for cancer, eEF2K, FGFR, survivin, and TNF-a (PubMed:31908094).</text>
</comment>
<comment type="similarity">
    <text evidence="5">Belongs to the PheA/TfdB FAD monooxygenase family.</text>
</comment>
<name>AZPA4_ASPTN</name>